<feature type="chain" id="PRO_0000055732" description="Protein kinase C">
    <location>
        <begin position="1"/>
        <end position="739"/>
    </location>
</feature>
<feature type="domain" description="C2" evidence="1">
    <location>
        <begin position="1"/>
        <end position="117"/>
    </location>
</feature>
<feature type="domain" description="Protein kinase" evidence="2">
    <location>
        <begin position="408"/>
        <end position="665"/>
    </location>
</feature>
<feature type="domain" description="AGC-kinase C-terminal" evidence="4">
    <location>
        <begin position="666"/>
        <end position="737"/>
    </location>
</feature>
<feature type="zinc finger region" description="Phorbol-ester/DAG-type 1" evidence="3">
    <location>
        <begin position="176"/>
        <end position="226"/>
    </location>
</feature>
<feature type="zinc finger region" description="Phorbol-ester/DAG-type 2" evidence="3">
    <location>
        <begin position="251"/>
        <end position="301"/>
    </location>
</feature>
<feature type="active site" description="Proton acceptor" evidence="2">
    <location>
        <position position="532"/>
    </location>
</feature>
<feature type="binding site" evidence="2">
    <location>
        <begin position="414"/>
        <end position="422"/>
    </location>
    <ligand>
        <name>ATP</name>
        <dbReference type="ChEBI" id="CHEBI:30616"/>
    </ligand>
</feature>
<feature type="binding site" evidence="2">
    <location>
        <position position="437"/>
    </location>
    <ligand>
        <name>ATP</name>
        <dbReference type="ChEBI" id="CHEBI:30616"/>
    </ligand>
</feature>
<organism>
    <name type="scientific">Drosophila melanogaster</name>
    <name type="common">Fruit fly</name>
    <dbReference type="NCBI Taxonomy" id="7227"/>
    <lineage>
        <taxon>Eukaryota</taxon>
        <taxon>Metazoa</taxon>
        <taxon>Ecdysozoa</taxon>
        <taxon>Arthropoda</taxon>
        <taxon>Hexapoda</taxon>
        <taxon>Insecta</taxon>
        <taxon>Pterygota</taxon>
        <taxon>Neoptera</taxon>
        <taxon>Endopterygota</taxon>
        <taxon>Diptera</taxon>
        <taxon>Brachycera</taxon>
        <taxon>Muscomorpha</taxon>
        <taxon>Ephydroidea</taxon>
        <taxon>Drosophilidae</taxon>
        <taxon>Drosophila</taxon>
        <taxon>Sophophora</taxon>
    </lineage>
</organism>
<name>KPC3_DROME</name>
<keyword id="KW-0067">ATP-binding</keyword>
<keyword id="KW-0106">Calcium</keyword>
<keyword id="KW-0418">Kinase</keyword>
<keyword id="KW-0479">Metal-binding</keyword>
<keyword id="KW-0547">Nucleotide-binding</keyword>
<keyword id="KW-0597">Phosphoprotein</keyword>
<keyword id="KW-1185">Reference proteome</keyword>
<keyword id="KW-0677">Repeat</keyword>
<keyword id="KW-0723">Serine/threonine-protein kinase</keyword>
<keyword id="KW-0808">Transferase</keyword>
<keyword id="KW-0862">Zinc</keyword>
<keyword id="KW-0863">Zinc-finger</keyword>
<gene>
    <name type="primary">Pkc98E</name>
    <name type="synonym">Pkc3</name>
    <name type="ORF">CG1954</name>
</gene>
<proteinExistence type="evidence at transcript level"/>
<dbReference type="EC" id="2.7.11.13"/>
<dbReference type="EMBL" id="J04848">
    <property type="protein sequence ID" value="AAA28818.1"/>
    <property type="status" value="ALT_FRAME"/>
    <property type="molecule type" value="mRNA"/>
</dbReference>
<dbReference type="EMBL" id="AE014297">
    <property type="protein sequence ID" value="AAF56846.1"/>
    <property type="molecule type" value="Genomic_DNA"/>
</dbReference>
<dbReference type="EMBL" id="AE014297">
    <property type="protein sequence ID" value="AHN57576.1"/>
    <property type="molecule type" value="Genomic_DNA"/>
</dbReference>
<dbReference type="PIR" id="B32392">
    <property type="entry name" value="B32392"/>
</dbReference>
<dbReference type="RefSeq" id="NP_001287577.1">
    <property type="nucleotide sequence ID" value="NM_001300648.1"/>
</dbReference>
<dbReference type="RefSeq" id="NP_524545.2">
    <property type="nucleotide sequence ID" value="NM_079821.4"/>
</dbReference>
<dbReference type="SMR" id="P13678"/>
<dbReference type="BioGRID" id="68299">
    <property type="interactions" value="17"/>
</dbReference>
<dbReference type="FunCoup" id="P13678">
    <property type="interactions" value="497"/>
</dbReference>
<dbReference type="IntAct" id="P13678">
    <property type="interactions" value="1"/>
</dbReference>
<dbReference type="STRING" id="7227.FBpp0084728"/>
<dbReference type="BindingDB" id="P13678"/>
<dbReference type="PaxDb" id="7227-FBpp0084728"/>
<dbReference type="DNASU" id="43428"/>
<dbReference type="EnsemblMetazoa" id="FBtr0085359">
    <property type="protein sequence ID" value="FBpp0084728"/>
    <property type="gene ID" value="FBgn0003093"/>
</dbReference>
<dbReference type="EnsemblMetazoa" id="FBtr0339150">
    <property type="protein sequence ID" value="FBpp0308295"/>
    <property type="gene ID" value="FBgn0003093"/>
</dbReference>
<dbReference type="GeneID" id="43428"/>
<dbReference type="KEGG" id="dme:Dmel_CG1954"/>
<dbReference type="AGR" id="FB:FBgn0003093"/>
<dbReference type="CTD" id="43428"/>
<dbReference type="FlyBase" id="FBgn0003093">
    <property type="gene designation" value="Pkc98E"/>
</dbReference>
<dbReference type="VEuPathDB" id="VectorBase:FBgn0003093"/>
<dbReference type="eggNOG" id="KOG0694">
    <property type="taxonomic scope" value="Eukaryota"/>
</dbReference>
<dbReference type="GeneTree" id="ENSGT00940000168328"/>
<dbReference type="InParanoid" id="P13678"/>
<dbReference type="OMA" id="TALHCCY"/>
<dbReference type="OrthoDB" id="63267at2759"/>
<dbReference type="PhylomeDB" id="P13678"/>
<dbReference type="BRENDA" id="2.7.11.13">
    <property type="organism ID" value="1994"/>
</dbReference>
<dbReference type="Reactome" id="R-DME-114508">
    <property type="pathway name" value="Effects of PIP2 hydrolysis"/>
</dbReference>
<dbReference type="Reactome" id="R-DME-1250196">
    <property type="pathway name" value="SHC1 events in ERBB2 signaling"/>
</dbReference>
<dbReference type="Reactome" id="R-DME-1489509">
    <property type="pathway name" value="DAG and IP3 signaling"/>
</dbReference>
<dbReference type="Reactome" id="R-DME-2029485">
    <property type="pathway name" value="Role of phospholipids in phagocytosis"/>
</dbReference>
<dbReference type="SignaLink" id="P13678"/>
<dbReference type="BioGRID-ORCS" id="43428">
    <property type="hits" value="0 hits in 3 CRISPR screens"/>
</dbReference>
<dbReference type="ChiTaRS" id="Pkc98E">
    <property type="organism name" value="fly"/>
</dbReference>
<dbReference type="GenomeRNAi" id="43428"/>
<dbReference type="PRO" id="PR:P13678"/>
<dbReference type="Proteomes" id="UP000000803">
    <property type="component" value="Chromosome 3R"/>
</dbReference>
<dbReference type="Bgee" id="FBgn0003093">
    <property type="expression patterns" value="Expressed in lamina monopolar neuron L2 (Drosophila) in insect head and 287 other cell types or tissues"/>
</dbReference>
<dbReference type="ExpressionAtlas" id="P13678">
    <property type="expression patterns" value="baseline and differential"/>
</dbReference>
<dbReference type="GO" id="GO:0005886">
    <property type="term" value="C:plasma membrane"/>
    <property type="evidence" value="ECO:0000250"/>
    <property type="project" value="FlyBase"/>
</dbReference>
<dbReference type="GO" id="GO:0005524">
    <property type="term" value="F:ATP binding"/>
    <property type="evidence" value="ECO:0007669"/>
    <property type="project" value="UniProtKB-KW"/>
</dbReference>
<dbReference type="GO" id="GO:0004699">
    <property type="term" value="F:diacylglycerol-dependent, calcium-independent serine/threonine kinase activity"/>
    <property type="evidence" value="ECO:0000250"/>
    <property type="project" value="FlyBase"/>
</dbReference>
<dbReference type="GO" id="GO:0106310">
    <property type="term" value="F:protein serine kinase activity"/>
    <property type="evidence" value="ECO:0007669"/>
    <property type="project" value="RHEA"/>
</dbReference>
<dbReference type="GO" id="GO:0004674">
    <property type="term" value="F:protein serine/threonine kinase activity"/>
    <property type="evidence" value="ECO:0000318"/>
    <property type="project" value="GO_Central"/>
</dbReference>
<dbReference type="GO" id="GO:0008270">
    <property type="term" value="F:zinc ion binding"/>
    <property type="evidence" value="ECO:0007669"/>
    <property type="project" value="UniProtKB-KW"/>
</dbReference>
<dbReference type="GO" id="GO:0009950">
    <property type="term" value="P:dorsal/ventral axis specification"/>
    <property type="evidence" value="ECO:0000315"/>
    <property type="project" value="FlyBase"/>
</dbReference>
<dbReference type="GO" id="GO:0007030">
    <property type="term" value="P:Golgi organization"/>
    <property type="evidence" value="ECO:0000315"/>
    <property type="project" value="FlyBase"/>
</dbReference>
<dbReference type="GO" id="GO:0035556">
    <property type="term" value="P:intracellular signal transduction"/>
    <property type="evidence" value="ECO:0000318"/>
    <property type="project" value="GO_Central"/>
</dbReference>
<dbReference type="GO" id="GO:0034389">
    <property type="term" value="P:lipid droplet organization"/>
    <property type="evidence" value="ECO:0000315"/>
    <property type="project" value="FlyBase"/>
</dbReference>
<dbReference type="GO" id="GO:0007616">
    <property type="term" value="P:long-term memory"/>
    <property type="evidence" value="ECO:0000315"/>
    <property type="project" value="FlyBase"/>
</dbReference>
<dbReference type="GO" id="GO:0008285">
    <property type="term" value="P:negative regulation of cell population proliferation"/>
    <property type="evidence" value="ECO:0000315"/>
    <property type="project" value="FlyBase"/>
</dbReference>
<dbReference type="GO" id="GO:0045471">
    <property type="term" value="P:response to ethanol"/>
    <property type="evidence" value="ECO:0000314"/>
    <property type="project" value="FlyBase"/>
</dbReference>
<dbReference type="CDD" id="cd20835">
    <property type="entry name" value="C1_nPKC_epsilon-like_rpt1"/>
    <property type="match status" value="1"/>
</dbReference>
<dbReference type="CDD" id="cd20838">
    <property type="entry name" value="C1_nPKC_epsilon-like_rpt2"/>
    <property type="match status" value="1"/>
</dbReference>
<dbReference type="CDD" id="cd04014">
    <property type="entry name" value="C2_PKC_epsilon"/>
    <property type="match status" value="1"/>
</dbReference>
<dbReference type="CDD" id="cd05591">
    <property type="entry name" value="STKc_nPKC_epsilon"/>
    <property type="match status" value="1"/>
</dbReference>
<dbReference type="FunFam" id="3.30.200.20:FF:000080">
    <property type="entry name" value="Protein kinase C"/>
    <property type="match status" value="1"/>
</dbReference>
<dbReference type="FunFam" id="3.30.60.20:FF:000063">
    <property type="entry name" value="Protein kinase C"/>
    <property type="match status" value="1"/>
</dbReference>
<dbReference type="FunFam" id="3.30.60.20:FF:000003">
    <property type="entry name" value="Protein kinase C delta"/>
    <property type="match status" value="1"/>
</dbReference>
<dbReference type="FunFam" id="1.10.510.10:FF:000126">
    <property type="entry name" value="Protein kinase C epsilon"/>
    <property type="match status" value="1"/>
</dbReference>
<dbReference type="FunFam" id="2.60.40.150:FF:000056">
    <property type="entry name" value="Protein kinase C epsilon"/>
    <property type="match status" value="1"/>
</dbReference>
<dbReference type="Gene3D" id="3.30.60.20">
    <property type="match status" value="2"/>
</dbReference>
<dbReference type="Gene3D" id="2.60.40.150">
    <property type="entry name" value="C2 domain"/>
    <property type="match status" value="1"/>
</dbReference>
<dbReference type="Gene3D" id="3.30.200.20">
    <property type="entry name" value="Phosphorylase Kinase, domain 1"/>
    <property type="match status" value="1"/>
</dbReference>
<dbReference type="Gene3D" id="1.10.510.10">
    <property type="entry name" value="Transferase(Phosphotransferase) domain 1"/>
    <property type="match status" value="1"/>
</dbReference>
<dbReference type="InterPro" id="IPR000961">
    <property type="entry name" value="AGC-kinase_C"/>
</dbReference>
<dbReference type="InterPro" id="IPR046349">
    <property type="entry name" value="C1-like_sf"/>
</dbReference>
<dbReference type="InterPro" id="IPR000008">
    <property type="entry name" value="C2_dom"/>
</dbReference>
<dbReference type="InterPro" id="IPR035892">
    <property type="entry name" value="C2_domain_sf"/>
</dbReference>
<dbReference type="InterPro" id="IPR020454">
    <property type="entry name" value="DAG/PE-bd"/>
</dbReference>
<dbReference type="InterPro" id="IPR011009">
    <property type="entry name" value="Kinase-like_dom_sf"/>
</dbReference>
<dbReference type="InterPro" id="IPR034669">
    <property type="entry name" value="nPKC_epsilon"/>
</dbReference>
<dbReference type="InterPro" id="IPR002219">
    <property type="entry name" value="PE/DAG-bd"/>
</dbReference>
<dbReference type="InterPro" id="IPR017892">
    <property type="entry name" value="Pkinase_C"/>
</dbReference>
<dbReference type="InterPro" id="IPR014376">
    <property type="entry name" value="Prot_kin_PKC_delta"/>
</dbReference>
<dbReference type="InterPro" id="IPR000719">
    <property type="entry name" value="Prot_kinase_dom"/>
</dbReference>
<dbReference type="InterPro" id="IPR017441">
    <property type="entry name" value="Protein_kinase_ATP_BS"/>
</dbReference>
<dbReference type="InterPro" id="IPR008271">
    <property type="entry name" value="Ser/Thr_kinase_AS"/>
</dbReference>
<dbReference type="PANTHER" id="PTHR24351">
    <property type="entry name" value="RIBOSOMAL PROTEIN S6 KINASE"/>
    <property type="match status" value="1"/>
</dbReference>
<dbReference type="Pfam" id="PF00130">
    <property type="entry name" value="C1_1"/>
    <property type="match status" value="2"/>
</dbReference>
<dbReference type="Pfam" id="PF00168">
    <property type="entry name" value="C2"/>
    <property type="match status" value="1"/>
</dbReference>
<dbReference type="Pfam" id="PF00069">
    <property type="entry name" value="Pkinase"/>
    <property type="match status" value="1"/>
</dbReference>
<dbReference type="Pfam" id="PF00433">
    <property type="entry name" value="Pkinase_C"/>
    <property type="match status" value="1"/>
</dbReference>
<dbReference type="PIRSF" id="PIRSF000551">
    <property type="entry name" value="PKC_delta"/>
    <property type="match status" value="1"/>
</dbReference>
<dbReference type="PRINTS" id="PR00008">
    <property type="entry name" value="DAGPEDOMAIN"/>
</dbReference>
<dbReference type="SMART" id="SM00109">
    <property type="entry name" value="C1"/>
    <property type="match status" value="2"/>
</dbReference>
<dbReference type="SMART" id="SM00239">
    <property type="entry name" value="C2"/>
    <property type="match status" value="1"/>
</dbReference>
<dbReference type="SMART" id="SM00133">
    <property type="entry name" value="S_TK_X"/>
    <property type="match status" value="1"/>
</dbReference>
<dbReference type="SMART" id="SM00220">
    <property type="entry name" value="S_TKc"/>
    <property type="match status" value="1"/>
</dbReference>
<dbReference type="SUPFAM" id="SSF49562">
    <property type="entry name" value="C2 domain (Calcium/lipid-binding domain, CaLB)"/>
    <property type="match status" value="1"/>
</dbReference>
<dbReference type="SUPFAM" id="SSF57889">
    <property type="entry name" value="Cysteine-rich domain"/>
    <property type="match status" value="2"/>
</dbReference>
<dbReference type="SUPFAM" id="SSF56112">
    <property type="entry name" value="Protein kinase-like (PK-like)"/>
    <property type="match status" value="1"/>
</dbReference>
<dbReference type="PROSITE" id="PS51285">
    <property type="entry name" value="AGC_KINASE_CTER"/>
    <property type="match status" value="1"/>
</dbReference>
<dbReference type="PROSITE" id="PS50004">
    <property type="entry name" value="C2"/>
    <property type="match status" value="1"/>
</dbReference>
<dbReference type="PROSITE" id="PS00107">
    <property type="entry name" value="PROTEIN_KINASE_ATP"/>
    <property type="match status" value="1"/>
</dbReference>
<dbReference type="PROSITE" id="PS50011">
    <property type="entry name" value="PROTEIN_KINASE_DOM"/>
    <property type="match status" value="1"/>
</dbReference>
<dbReference type="PROSITE" id="PS00108">
    <property type="entry name" value="PROTEIN_KINASE_ST"/>
    <property type="match status" value="1"/>
</dbReference>
<dbReference type="PROSITE" id="PS00479">
    <property type="entry name" value="ZF_DAG_PE_1"/>
    <property type="match status" value="2"/>
</dbReference>
<dbReference type="PROSITE" id="PS50081">
    <property type="entry name" value="ZF_DAG_PE_2"/>
    <property type="match status" value="2"/>
</dbReference>
<accession>P13678</accession>
<accession>A0A0B4LHW0</accession>
<accession>Q9VAQ6</accession>
<protein>
    <recommendedName>
        <fullName>Protein kinase C</fullName>
        <shortName>PKC</shortName>
        <ecNumber>2.7.11.13</ecNumber>
    </recommendedName>
    <alternativeName>
        <fullName>dPKC98F</fullName>
    </alternativeName>
</protein>
<evidence type="ECO:0000255" key="1">
    <source>
        <dbReference type="PROSITE-ProRule" id="PRU00041"/>
    </source>
</evidence>
<evidence type="ECO:0000255" key="2">
    <source>
        <dbReference type="PROSITE-ProRule" id="PRU00159"/>
    </source>
</evidence>
<evidence type="ECO:0000255" key="3">
    <source>
        <dbReference type="PROSITE-ProRule" id="PRU00226"/>
    </source>
</evidence>
<evidence type="ECO:0000255" key="4">
    <source>
        <dbReference type="PROSITE-ProRule" id="PRU00618"/>
    </source>
</evidence>
<evidence type="ECO:0000305" key="5"/>
<comment type="function">
    <text>PKC is activated by diacylglycerol which in turn phosphorylates a range of cellular proteins. PKC also serves as the receptor for phorbol esters, a class of tumor promoters.</text>
</comment>
<comment type="catalytic activity">
    <reaction>
        <text>L-seryl-[protein] + ATP = O-phospho-L-seryl-[protein] + ADP + H(+)</text>
        <dbReference type="Rhea" id="RHEA:17989"/>
        <dbReference type="Rhea" id="RHEA-COMP:9863"/>
        <dbReference type="Rhea" id="RHEA-COMP:11604"/>
        <dbReference type="ChEBI" id="CHEBI:15378"/>
        <dbReference type="ChEBI" id="CHEBI:29999"/>
        <dbReference type="ChEBI" id="CHEBI:30616"/>
        <dbReference type="ChEBI" id="CHEBI:83421"/>
        <dbReference type="ChEBI" id="CHEBI:456216"/>
        <dbReference type="EC" id="2.7.11.13"/>
    </reaction>
</comment>
<comment type="catalytic activity">
    <reaction>
        <text>L-threonyl-[protein] + ATP = O-phospho-L-threonyl-[protein] + ADP + H(+)</text>
        <dbReference type="Rhea" id="RHEA:46608"/>
        <dbReference type="Rhea" id="RHEA-COMP:11060"/>
        <dbReference type="Rhea" id="RHEA-COMP:11605"/>
        <dbReference type="ChEBI" id="CHEBI:15378"/>
        <dbReference type="ChEBI" id="CHEBI:30013"/>
        <dbReference type="ChEBI" id="CHEBI:30616"/>
        <dbReference type="ChEBI" id="CHEBI:61977"/>
        <dbReference type="ChEBI" id="CHEBI:456216"/>
        <dbReference type="EC" id="2.7.11.13"/>
    </reaction>
</comment>
<comment type="miscellaneous">
    <text>This is a calcium-activated, phospholipid-dependent, serine- and threonine-specific enzyme.</text>
</comment>
<comment type="similarity">
    <text evidence="5">Belongs to the protein kinase superfamily. AGC Ser/Thr protein kinase family. PKC subfamily.</text>
</comment>
<comment type="sequence caution" evidence="5">
    <conflict type="frameshift">
        <sequence resource="EMBL-CDS" id="AAA28818"/>
    </conflict>
</comment>
<reference key="1">
    <citation type="journal article" date="1989" name="Cell">
        <title>Isolation and characterization of two new Drosophila protein kinase C genes, including one specifically expressed in photoreceptor cells.</title>
        <authorList>
            <person name="Schaeffer E."/>
            <person name="Smith D."/>
            <person name="Mardon G."/>
            <person name="Quinn W."/>
            <person name="Zuker C."/>
        </authorList>
    </citation>
    <scope>NUCLEOTIDE SEQUENCE [MRNA]</scope>
</reference>
<reference key="2">
    <citation type="journal article" date="2000" name="Science">
        <title>The genome sequence of Drosophila melanogaster.</title>
        <authorList>
            <person name="Adams M.D."/>
            <person name="Celniker S.E."/>
            <person name="Holt R.A."/>
            <person name="Evans C.A."/>
            <person name="Gocayne J.D."/>
            <person name="Amanatides P.G."/>
            <person name="Scherer S.E."/>
            <person name="Li P.W."/>
            <person name="Hoskins R.A."/>
            <person name="Galle R.F."/>
            <person name="George R.A."/>
            <person name="Lewis S.E."/>
            <person name="Richards S."/>
            <person name="Ashburner M."/>
            <person name="Henderson S.N."/>
            <person name="Sutton G.G."/>
            <person name="Wortman J.R."/>
            <person name="Yandell M.D."/>
            <person name="Zhang Q."/>
            <person name="Chen L.X."/>
            <person name="Brandon R.C."/>
            <person name="Rogers Y.-H.C."/>
            <person name="Blazej R.G."/>
            <person name="Champe M."/>
            <person name="Pfeiffer B.D."/>
            <person name="Wan K.H."/>
            <person name="Doyle C."/>
            <person name="Baxter E.G."/>
            <person name="Helt G."/>
            <person name="Nelson C.R."/>
            <person name="Miklos G.L.G."/>
            <person name="Abril J.F."/>
            <person name="Agbayani A."/>
            <person name="An H.-J."/>
            <person name="Andrews-Pfannkoch C."/>
            <person name="Baldwin D."/>
            <person name="Ballew R.M."/>
            <person name="Basu A."/>
            <person name="Baxendale J."/>
            <person name="Bayraktaroglu L."/>
            <person name="Beasley E.M."/>
            <person name="Beeson K.Y."/>
            <person name="Benos P.V."/>
            <person name="Berman B.P."/>
            <person name="Bhandari D."/>
            <person name="Bolshakov S."/>
            <person name="Borkova D."/>
            <person name="Botchan M.R."/>
            <person name="Bouck J."/>
            <person name="Brokstein P."/>
            <person name="Brottier P."/>
            <person name="Burtis K.C."/>
            <person name="Busam D.A."/>
            <person name="Butler H."/>
            <person name="Cadieu E."/>
            <person name="Center A."/>
            <person name="Chandra I."/>
            <person name="Cherry J.M."/>
            <person name="Cawley S."/>
            <person name="Dahlke C."/>
            <person name="Davenport L.B."/>
            <person name="Davies P."/>
            <person name="de Pablos B."/>
            <person name="Delcher A."/>
            <person name="Deng Z."/>
            <person name="Mays A.D."/>
            <person name="Dew I."/>
            <person name="Dietz S.M."/>
            <person name="Dodson K."/>
            <person name="Doup L.E."/>
            <person name="Downes M."/>
            <person name="Dugan-Rocha S."/>
            <person name="Dunkov B.C."/>
            <person name="Dunn P."/>
            <person name="Durbin K.J."/>
            <person name="Evangelista C.C."/>
            <person name="Ferraz C."/>
            <person name="Ferriera S."/>
            <person name="Fleischmann W."/>
            <person name="Fosler C."/>
            <person name="Gabrielian A.E."/>
            <person name="Garg N.S."/>
            <person name="Gelbart W.M."/>
            <person name="Glasser K."/>
            <person name="Glodek A."/>
            <person name="Gong F."/>
            <person name="Gorrell J.H."/>
            <person name="Gu Z."/>
            <person name="Guan P."/>
            <person name="Harris M."/>
            <person name="Harris N.L."/>
            <person name="Harvey D.A."/>
            <person name="Heiman T.J."/>
            <person name="Hernandez J.R."/>
            <person name="Houck J."/>
            <person name="Hostin D."/>
            <person name="Houston K.A."/>
            <person name="Howland T.J."/>
            <person name="Wei M.-H."/>
            <person name="Ibegwam C."/>
            <person name="Jalali M."/>
            <person name="Kalush F."/>
            <person name="Karpen G.H."/>
            <person name="Ke Z."/>
            <person name="Kennison J.A."/>
            <person name="Ketchum K.A."/>
            <person name="Kimmel B.E."/>
            <person name="Kodira C.D."/>
            <person name="Kraft C.L."/>
            <person name="Kravitz S."/>
            <person name="Kulp D."/>
            <person name="Lai Z."/>
            <person name="Lasko P."/>
            <person name="Lei Y."/>
            <person name="Levitsky A.A."/>
            <person name="Li J.H."/>
            <person name="Li Z."/>
            <person name="Liang Y."/>
            <person name="Lin X."/>
            <person name="Liu X."/>
            <person name="Mattei B."/>
            <person name="McIntosh T.C."/>
            <person name="McLeod M.P."/>
            <person name="McPherson D."/>
            <person name="Merkulov G."/>
            <person name="Milshina N.V."/>
            <person name="Mobarry C."/>
            <person name="Morris J."/>
            <person name="Moshrefi A."/>
            <person name="Mount S.M."/>
            <person name="Moy M."/>
            <person name="Murphy B."/>
            <person name="Murphy L."/>
            <person name="Muzny D.M."/>
            <person name="Nelson D.L."/>
            <person name="Nelson D.R."/>
            <person name="Nelson K.A."/>
            <person name="Nixon K."/>
            <person name="Nusskern D.R."/>
            <person name="Pacleb J.M."/>
            <person name="Palazzolo M."/>
            <person name="Pittman G.S."/>
            <person name="Pan S."/>
            <person name="Pollard J."/>
            <person name="Puri V."/>
            <person name="Reese M.G."/>
            <person name="Reinert K."/>
            <person name="Remington K."/>
            <person name="Saunders R.D.C."/>
            <person name="Scheeler F."/>
            <person name="Shen H."/>
            <person name="Shue B.C."/>
            <person name="Siden-Kiamos I."/>
            <person name="Simpson M."/>
            <person name="Skupski M.P."/>
            <person name="Smith T.J."/>
            <person name="Spier E."/>
            <person name="Spradling A.C."/>
            <person name="Stapleton M."/>
            <person name="Strong R."/>
            <person name="Sun E."/>
            <person name="Svirskas R."/>
            <person name="Tector C."/>
            <person name="Turner R."/>
            <person name="Venter E."/>
            <person name="Wang A.H."/>
            <person name="Wang X."/>
            <person name="Wang Z.-Y."/>
            <person name="Wassarman D.A."/>
            <person name="Weinstock G.M."/>
            <person name="Weissenbach J."/>
            <person name="Williams S.M."/>
            <person name="Woodage T."/>
            <person name="Worley K.C."/>
            <person name="Wu D."/>
            <person name="Yang S."/>
            <person name="Yao Q.A."/>
            <person name="Ye J."/>
            <person name="Yeh R.-F."/>
            <person name="Zaveri J.S."/>
            <person name="Zhan M."/>
            <person name="Zhang G."/>
            <person name="Zhao Q."/>
            <person name="Zheng L."/>
            <person name="Zheng X.H."/>
            <person name="Zhong F.N."/>
            <person name="Zhong W."/>
            <person name="Zhou X."/>
            <person name="Zhu S.C."/>
            <person name="Zhu X."/>
            <person name="Smith H.O."/>
            <person name="Gibbs R.A."/>
            <person name="Myers E.W."/>
            <person name="Rubin G.M."/>
            <person name="Venter J.C."/>
        </authorList>
    </citation>
    <scope>NUCLEOTIDE SEQUENCE [LARGE SCALE GENOMIC DNA]</scope>
    <source>
        <strain>Berkeley</strain>
    </source>
</reference>
<reference key="3">
    <citation type="journal article" date="2002" name="Genome Biol.">
        <title>Annotation of the Drosophila melanogaster euchromatic genome: a systematic review.</title>
        <authorList>
            <person name="Misra S."/>
            <person name="Crosby M.A."/>
            <person name="Mungall C.J."/>
            <person name="Matthews B.B."/>
            <person name="Campbell K.S."/>
            <person name="Hradecky P."/>
            <person name="Huang Y."/>
            <person name="Kaminker J.S."/>
            <person name="Millburn G.H."/>
            <person name="Prochnik S.E."/>
            <person name="Smith C.D."/>
            <person name="Tupy J.L."/>
            <person name="Whitfield E.J."/>
            <person name="Bayraktaroglu L."/>
            <person name="Berman B.P."/>
            <person name="Bettencourt B.R."/>
            <person name="Celniker S.E."/>
            <person name="de Grey A.D.N.J."/>
            <person name="Drysdale R.A."/>
            <person name="Harris N.L."/>
            <person name="Richter J."/>
            <person name="Russo S."/>
            <person name="Schroeder A.J."/>
            <person name="Shu S.Q."/>
            <person name="Stapleton M."/>
            <person name="Yamada C."/>
            <person name="Ashburner M."/>
            <person name="Gelbart W.M."/>
            <person name="Rubin G.M."/>
            <person name="Lewis S.E."/>
        </authorList>
    </citation>
    <scope>GENOME REANNOTATION</scope>
    <source>
        <strain>Berkeley</strain>
    </source>
</reference>
<sequence length="739" mass="83107">MFTGKLQIKVCEASGLRPTDFQKRHNLTFGKLADEQLIDPYVSIDVDESHFDRATTRPKTFDPVWNEQFVHDVTNVSNINLTVFHDAALPPDDFVANCIISFEDLMQSETAVQDLWVNLEPQGKIHVIIELKNRTDKAKAEAVVEHTVAVNKEFKERAGFNRRRGAMRRRVHQVNGHKFMATFLRQPTFCSHCREFIWGIGKQGYQCQVCTLVVHKKCHLSVVSKCPGMRDEQPAKVEMVPAGQRFNVNLPHRFVVHSYKRFTFCDHCGSLLYGLIKQGLQCETCGMNVHKRCQKNVANTCGINTKQMAEILSSLGISPDKQQPRRSKYLNQQGGEDNYGASLGADGDGAPGQSFRSCALSVDSLATSTTTMTSGYNSSSCMSLAVTGSGGVGATGETRPGKCSLLDFNFIKVLGKGSFGKVMLAEKKGTDEIYAIKVLKKDAIIQDDDVDCTMTEKRILALAANHPFLTALHSCFQTPDRLFFVMEYVNGGDLMFQIQKARRFEASRAAFYAAEVTLALQFLHTHGVIYRDLKLDNILLDQEGHCKLADFGMCKEGIMNGMLTTTFCGTPDYIAPEILKEQEYGASVDWWALGVLMYEMMAGQPPFEADNEDELFDSIMHDDVLYPVWLSREAVSILKGFLTKNPEQRLGCTGDENEIRKHPFFAKLDWKELEKRNIKPPFRPKMKNPRDANNFDAEFTKEDPVLTPIGNEVVRCINQDEFAGFSFVNPKFGPERKVY</sequence>